<dbReference type="EC" id="7.1.1.-" evidence="1"/>
<dbReference type="EMBL" id="CP000095">
    <property type="protein sequence ID" value="AAZ58620.1"/>
    <property type="molecule type" value="Genomic_DNA"/>
</dbReference>
<dbReference type="RefSeq" id="WP_011295474.1">
    <property type="nucleotide sequence ID" value="NC_007335.2"/>
</dbReference>
<dbReference type="SMR" id="Q46IQ8"/>
<dbReference type="STRING" id="59920.PMN2A_1130"/>
<dbReference type="DNASU" id="3606518"/>
<dbReference type="KEGG" id="pmn:PMN2A_1130"/>
<dbReference type="HOGENOM" id="CLU_087432_0_0_3"/>
<dbReference type="OrthoDB" id="510798at2"/>
<dbReference type="PhylomeDB" id="Q46IQ8"/>
<dbReference type="Proteomes" id="UP000002535">
    <property type="component" value="Chromosome"/>
</dbReference>
<dbReference type="GO" id="GO:0031676">
    <property type="term" value="C:plasma membrane-derived thylakoid membrane"/>
    <property type="evidence" value="ECO:0007669"/>
    <property type="project" value="UniProtKB-SubCell"/>
</dbReference>
<dbReference type="GO" id="GO:0016655">
    <property type="term" value="F:oxidoreductase activity, acting on NAD(P)H, quinone or similar compound as acceptor"/>
    <property type="evidence" value="ECO:0007669"/>
    <property type="project" value="UniProtKB-UniRule"/>
</dbReference>
<dbReference type="GO" id="GO:0048038">
    <property type="term" value="F:quinone binding"/>
    <property type="evidence" value="ECO:0007669"/>
    <property type="project" value="UniProtKB-KW"/>
</dbReference>
<dbReference type="HAMAP" id="MF_01353">
    <property type="entry name" value="NDH1_NDH1N"/>
    <property type="match status" value="1"/>
</dbReference>
<dbReference type="InterPro" id="IPR020874">
    <property type="entry name" value="NAD(P)H-quinone_OxRdtase_su_N"/>
</dbReference>
<dbReference type="PANTHER" id="PTHR35515">
    <property type="entry name" value="NAD(P)H-QUINONE OXIDOREDUCTASE SUBUNIT N, CHLOROPLASTIC"/>
    <property type="match status" value="1"/>
</dbReference>
<dbReference type="PANTHER" id="PTHR35515:SF1">
    <property type="entry name" value="NAD(P)H-QUINONE OXIDOREDUCTASE SUBUNIT N, CHLOROPLASTIC"/>
    <property type="match status" value="1"/>
</dbReference>
<dbReference type="Pfam" id="PF11909">
    <property type="entry name" value="NdhN"/>
    <property type="match status" value="1"/>
</dbReference>
<keyword id="KW-0472">Membrane</keyword>
<keyword id="KW-0520">NAD</keyword>
<keyword id="KW-0521">NADP</keyword>
<keyword id="KW-0618">Plastoquinone</keyword>
<keyword id="KW-0874">Quinone</keyword>
<keyword id="KW-1185">Reference proteome</keyword>
<keyword id="KW-0793">Thylakoid</keyword>
<keyword id="KW-1278">Translocase</keyword>
<keyword id="KW-0813">Transport</keyword>
<reference key="1">
    <citation type="journal article" date="2007" name="PLoS Genet.">
        <title>Patterns and implications of gene gain and loss in the evolution of Prochlorococcus.</title>
        <authorList>
            <person name="Kettler G.C."/>
            <person name="Martiny A.C."/>
            <person name="Huang K."/>
            <person name="Zucker J."/>
            <person name="Coleman M.L."/>
            <person name="Rodrigue S."/>
            <person name="Chen F."/>
            <person name="Lapidus A."/>
            <person name="Ferriera S."/>
            <person name="Johnson J."/>
            <person name="Steglich C."/>
            <person name="Church G.M."/>
            <person name="Richardson P."/>
            <person name="Chisholm S.W."/>
        </authorList>
    </citation>
    <scope>NUCLEOTIDE SEQUENCE [LARGE SCALE GENOMIC DNA]</scope>
    <source>
        <strain>NATL2A</strain>
    </source>
</reference>
<protein>
    <recommendedName>
        <fullName evidence="1">NAD(P)H-quinone oxidoreductase subunit N</fullName>
        <ecNumber evidence="1">7.1.1.-</ecNumber>
    </recommendedName>
    <alternativeName>
        <fullName evidence="1">NAD(P)H dehydrogenase I subunit N</fullName>
        <shortName evidence="1">NDH-1 subunit N</shortName>
        <shortName evidence="1">NDH-N</shortName>
    </alternativeName>
</protein>
<name>NDHN_PROMT</name>
<comment type="function">
    <text evidence="1">NDH-1 shuttles electrons from an unknown electron donor, via FMN and iron-sulfur (Fe-S) centers, to quinones in the respiratory and/or the photosynthetic chain. The immediate electron acceptor for the enzyme in this species is believed to be plastoquinone. Couples the redox reaction to proton translocation, and thus conserves the redox energy in a proton gradient. Cyanobacterial NDH-1 also plays a role in inorganic carbon-concentration.</text>
</comment>
<comment type="catalytic activity">
    <reaction evidence="1">
        <text>a plastoquinone + NADH + (n+1) H(+)(in) = a plastoquinol + NAD(+) + n H(+)(out)</text>
        <dbReference type="Rhea" id="RHEA:42608"/>
        <dbReference type="Rhea" id="RHEA-COMP:9561"/>
        <dbReference type="Rhea" id="RHEA-COMP:9562"/>
        <dbReference type="ChEBI" id="CHEBI:15378"/>
        <dbReference type="ChEBI" id="CHEBI:17757"/>
        <dbReference type="ChEBI" id="CHEBI:57540"/>
        <dbReference type="ChEBI" id="CHEBI:57945"/>
        <dbReference type="ChEBI" id="CHEBI:62192"/>
    </reaction>
</comment>
<comment type="catalytic activity">
    <reaction evidence="1">
        <text>a plastoquinone + NADPH + (n+1) H(+)(in) = a plastoquinol + NADP(+) + n H(+)(out)</text>
        <dbReference type="Rhea" id="RHEA:42612"/>
        <dbReference type="Rhea" id="RHEA-COMP:9561"/>
        <dbReference type="Rhea" id="RHEA-COMP:9562"/>
        <dbReference type="ChEBI" id="CHEBI:15378"/>
        <dbReference type="ChEBI" id="CHEBI:17757"/>
        <dbReference type="ChEBI" id="CHEBI:57783"/>
        <dbReference type="ChEBI" id="CHEBI:58349"/>
        <dbReference type="ChEBI" id="CHEBI:62192"/>
    </reaction>
</comment>
<comment type="subunit">
    <text evidence="1">NDH-1 can be composed of about 15 different subunits; different subcomplexes with different compositions have been identified which probably have different functions.</text>
</comment>
<comment type="subcellular location">
    <subcellularLocation>
        <location evidence="1">Cellular thylakoid membrane</location>
        <topology evidence="1">Peripheral membrane protein</topology>
        <orientation evidence="1">Cytoplasmic side</orientation>
    </subcellularLocation>
</comment>
<comment type="similarity">
    <text evidence="1">Belongs to the complex I NdhN subunit family.</text>
</comment>
<sequence>MPLLLSGQKFRTDLESFGCLAILSPLEGGAETRLLRRLRASGYQTQVTSARGLGDPVVFLTQLHGIRPPHLGHQNVGRNGALGEVQQVIPQLNELLVEDKPLVLWLLEGQVLSKSELLAINNLCQKEPRIKIVIEMGGARSIKWQPLNEFINKD</sequence>
<organism>
    <name type="scientific">Prochlorococcus marinus (strain NATL2A)</name>
    <dbReference type="NCBI Taxonomy" id="59920"/>
    <lineage>
        <taxon>Bacteria</taxon>
        <taxon>Bacillati</taxon>
        <taxon>Cyanobacteriota</taxon>
        <taxon>Cyanophyceae</taxon>
        <taxon>Synechococcales</taxon>
        <taxon>Prochlorococcaceae</taxon>
        <taxon>Prochlorococcus</taxon>
    </lineage>
</organism>
<accession>Q46IQ8</accession>
<feature type="chain" id="PRO_0000352229" description="NAD(P)H-quinone oxidoreductase subunit N">
    <location>
        <begin position="1"/>
        <end position="154"/>
    </location>
</feature>
<proteinExistence type="inferred from homology"/>
<gene>
    <name evidence="1" type="primary">ndhN</name>
    <name type="ordered locus">PMN2A_1130</name>
</gene>
<evidence type="ECO:0000255" key="1">
    <source>
        <dbReference type="HAMAP-Rule" id="MF_01353"/>
    </source>
</evidence>